<dbReference type="EC" id="7.1.1.-" evidence="1"/>
<dbReference type="EMBL" id="CP000050">
    <property type="protein sequence ID" value="AAY48665.1"/>
    <property type="molecule type" value="Genomic_DNA"/>
</dbReference>
<dbReference type="RefSeq" id="WP_005914274.1">
    <property type="nucleotide sequence ID" value="NZ_CP155948.1"/>
</dbReference>
<dbReference type="SMR" id="Q4UWA8"/>
<dbReference type="GeneID" id="97510981"/>
<dbReference type="KEGG" id="xcb:XC_1599"/>
<dbReference type="HOGENOM" id="CLU_144724_2_0_6"/>
<dbReference type="Proteomes" id="UP000000420">
    <property type="component" value="Chromosome"/>
</dbReference>
<dbReference type="GO" id="GO:0030964">
    <property type="term" value="C:NADH dehydrogenase complex"/>
    <property type="evidence" value="ECO:0007669"/>
    <property type="project" value="TreeGrafter"/>
</dbReference>
<dbReference type="GO" id="GO:0005886">
    <property type="term" value="C:plasma membrane"/>
    <property type="evidence" value="ECO:0007669"/>
    <property type="project" value="UniProtKB-SubCell"/>
</dbReference>
<dbReference type="GO" id="GO:0050136">
    <property type="term" value="F:NADH:ubiquinone reductase (non-electrogenic) activity"/>
    <property type="evidence" value="ECO:0007669"/>
    <property type="project" value="UniProtKB-UniRule"/>
</dbReference>
<dbReference type="GO" id="GO:0048038">
    <property type="term" value="F:quinone binding"/>
    <property type="evidence" value="ECO:0007669"/>
    <property type="project" value="UniProtKB-KW"/>
</dbReference>
<dbReference type="GO" id="GO:0042773">
    <property type="term" value="P:ATP synthesis coupled electron transport"/>
    <property type="evidence" value="ECO:0007669"/>
    <property type="project" value="InterPro"/>
</dbReference>
<dbReference type="FunFam" id="1.10.287.3510:FF:000001">
    <property type="entry name" value="NADH-quinone oxidoreductase subunit K"/>
    <property type="match status" value="1"/>
</dbReference>
<dbReference type="Gene3D" id="1.10.287.3510">
    <property type="match status" value="1"/>
</dbReference>
<dbReference type="HAMAP" id="MF_01456">
    <property type="entry name" value="NDH1_NuoK"/>
    <property type="match status" value="1"/>
</dbReference>
<dbReference type="InterPro" id="IPR001133">
    <property type="entry name" value="NADH_UbQ_OxRdtase_chain4L/K"/>
</dbReference>
<dbReference type="InterPro" id="IPR039428">
    <property type="entry name" value="NUOK/Mnh_C1-like"/>
</dbReference>
<dbReference type="NCBIfam" id="NF004320">
    <property type="entry name" value="PRK05715.1-2"/>
    <property type="match status" value="1"/>
</dbReference>
<dbReference type="NCBIfam" id="NF004321">
    <property type="entry name" value="PRK05715.1-3"/>
    <property type="match status" value="1"/>
</dbReference>
<dbReference type="NCBIfam" id="NF004323">
    <property type="entry name" value="PRK05715.1-5"/>
    <property type="match status" value="1"/>
</dbReference>
<dbReference type="PANTHER" id="PTHR11434:SF21">
    <property type="entry name" value="NADH DEHYDROGENASE SUBUNIT 4L-RELATED"/>
    <property type="match status" value="1"/>
</dbReference>
<dbReference type="PANTHER" id="PTHR11434">
    <property type="entry name" value="NADH-UBIQUINONE OXIDOREDUCTASE SUBUNIT ND4L"/>
    <property type="match status" value="1"/>
</dbReference>
<dbReference type="Pfam" id="PF00420">
    <property type="entry name" value="Oxidored_q2"/>
    <property type="match status" value="1"/>
</dbReference>
<feature type="chain" id="PRO_0000390274" description="NADH-quinone oxidoreductase subunit K">
    <location>
        <begin position="1"/>
        <end position="101"/>
    </location>
</feature>
<feature type="transmembrane region" description="Helical" evidence="1">
    <location>
        <begin position="4"/>
        <end position="24"/>
    </location>
</feature>
<feature type="transmembrane region" description="Helical" evidence="1">
    <location>
        <begin position="30"/>
        <end position="50"/>
    </location>
</feature>
<feature type="transmembrane region" description="Helical" evidence="1">
    <location>
        <begin position="62"/>
        <end position="82"/>
    </location>
</feature>
<reference key="1">
    <citation type="journal article" date="2005" name="Genome Res.">
        <title>Comparative and functional genomic analyses of the pathogenicity of phytopathogen Xanthomonas campestris pv. campestris.</title>
        <authorList>
            <person name="Qian W."/>
            <person name="Jia Y."/>
            <person name="Ren S.-X."/>
            <person name="He Y.-Q."/>
            <person name="Feng J.-X."/>
            <person name="Lu L.-F."/>
            <person name="Sun Q."/>
            <person name="Ying G."/>
            <person name="Tang D.-J."/>
            <person name="Tang H."/>
            <person name="Wu W."/>
            <person name="Hao P."/>
            <person name="Wang L."/>
            <person name="Jiang B.-L."/>
            <person name="Zeng S."/>
            <person name="Gu W.-Y."/>
            <person name="Lu G."/>
            <person name="Rong L."/>
            <person name="Tian Y."/>
            <person name="Yao Z."/>
            <person name="Fu G."/>
            <person name="Chen B."/>
            <person name="Fang R."/>
            <person name="Qiang B."/>
            <person name="Chen Z."/>
            <person name="Zhao G.-P."/>
            <person name="Tang J.-L."/>
            <person name="He C."/>
        </authorList>
    </citation>
    <scope>NUCLEOTIDE SEQUENCE [LARGE SCALE GENOMIC DNA]</scope>
    <source>
        <strain>8004</strain>
    </source>
</reference>
<gene>
    <name evidence="1" type="primary">nuoK</name>
    <name type="ordered locus">XC_1599</name>
</gene>
<organism>
    <name type="scientific">Xanthomonas campestris pv. campestris (strain 8004)</name>
    <dbReference type="NCBI Taxonomy" id="314565"/>
    <lineage>
        <taxon>Bacteria</taxon>
        <taxon>Pseudomonadati</taxon>
        <taxon>Pseudomonadota</taxon>
        <taxon>Gammaproteobacteria</taxon>
        <taxon>Lysobacterales</taxon>
        <taxon>Lysobacteraceae</taxon>
        <taxon>Xanthomonas</taxon>
    </lineage>
</organism>
<evidence type="ECO:0000255" key="1">
    <source>
        <dbReference type="HAMAP-Rule" id="MF_01456"/>
    </source>
</evidence>
<proteinExistence type="inferred from homology"/>
<name>NUOK_XANC8</name>
<keyword id="KW-0997">Cell inner membrane</keyword>
<keyword id="KW-1003">Cell membrane</keyword>
<keyword id="KW-0472">Membrane</keyword>
<keyword id="KW-0520">NAD</keyword>
<keyword id="KW-0874">Quinone</keyword>
<keyword id="KW-1278">Translocase</keyword>
<keyword id="KW-0812">Transmembrane</keyword>
<keyword id="KW-1133">Transmembrane helix</keyword>
<keyword id="KW-0813">Transport</keyword>
<keyword id="KW-0830">Ubiquinone</keyword>
<comment type="function">
    <text evidence="1">NDH-1 shuttles electrons from NADH, via FMN and iron-sulfur (Fe-S) centers, to quinones in the respiratory chain. The immediate electron acceptor for the enzyme in this species is believed to be ubiquinone. Couples the redox reaction to proton translocation (for every two electrons transferred, four hydrogen ions are translocated across the cytoplasmic membrane), and thus conserves the redox energy in a proton gradient.</text>
</comment>
<comment type="catalytic activity">
    <reaction evidence="1">
        <text>a quinone + NADH + 5 H(+)(in) = a quinol + NAD(+) + 4 H(+)(out)</text>
        <dbReference type="Rhea" id="RHEA:57888"/>
        <dbReference type="ChEBI" id="CHEBI:15378"/>
        <dbReference type="ChEBI" id="CHEBI:24646"/>
        <dbReference type="ChEBI" id="CHEBI:57540"/>
        <dbReference type="ChEBI" id="CHEBI:57945"/>
        <dbReference type="ChEBI" id="CHEBI:132124"/>
    </reaction>
</comment>
<comment type="subunit">
    <text evidence="1">NDH-1 is composed of 14 different subunits. Subunits NuoA, H, J, K, L, M, N constitute the membrane sector of the complex.</text>
</comment>
<comment type="subcellular location">
    <subcellularLocation>
        <location evidence="1">Cell inner membrane</location>
        <topology evidence="1">Multi-pass membrane protein</topology>
    </subcellularLocation>
</comment>
<comment type="similarity">
    <text evidence="1">Belongs to the complex I subunit 4L family.</text>
</comment>
<sequence length="101" mass="10879">MITLGHLLGLGAVLFCISLAGIFLNRKNVIVLLMSIELMLLSVNVNFIAFSRELGDTAGQLFVFFILTVAAAEAAIGLAILVTLFRTRRTINVAEVDTLKG</sequence>
<accession>Q4UWA8</accession>
<protein>
    <recommendedName>
        <fullName evidence="1">NADH-quinone oxidoreductase subunit K</fullName>
        <ecNumber evidence="1">7.1.1.-</ecNumber>
    </recommendedName>
    <alternativeName>
        <fullName evidence="1">NADH dehydrogenase I subunit K</fullName>
    </alternativeName>
    <alternativeName>
        <fullName evidence="1">NDH-1 subunit K</fullName>
    </alternativeName>
</protein>